<accession>Q824X8</accession>
<evidence type="ECO:0000255" key="1">
    <source>
        <dbReference type="HAMAP-Rule" id="MF_00469"/>
    </source>
</evidence>
<proteinExistence type="inferred from homology"/>
<name>TRHO_CHLCV</name>
<gene>
    <name evidence="1" type="primary">trhO</name>
    <name type="ordered locus">CCA_00010</name>
</gene>
<sequence>MKKNYYALAYYYLTRVDNPQLEIALHKELFKDLDVSCRIYISEQGINGQFSGYQPDAEHYMNWLRQRPGFSNVKFKIHHIEENIFPRVTVKYRKELVALGCDVDLTTQGKHISPKEWHEKLKENRCLVLDVRNNYEWKIGHFENAVLPDIQTFREFPEYAERLSKEHDPATTPVMMYCTGGIRCELYSSLLLEKGFKEVYQLDGGVIAYGQAVGTGKWRGKLFVFDDRLAVPIDETDTDVAPIAQCSHCGVGCDTYYNCANTDCNNLFICCEDCIDSTKGCCSQECSQAPRIRAFSPSRGNKPFRRMHLCEQVECEQVEKKASSCCCSCSH</sequence>
<dbReference type="EC" id="1.14.-.-" evidence="1"/>
<dbReference type="EMBL" id="AE015925">
    <property type="protein sequence ID" value="AAP04763.1"/>
    <property type="molecule type" value="Genomic_DNA"/>
</dbReference>
<dbReference type="RefSeq" id="WP_011005984.1">
    <property type="nucleotide sequence ID" value="NC_003361.3"/>
</dbReference>
<dbReference type="SMR" id="Q824X8"/>
<dbReference type="STRING" id="227941.CCA_00010"/>
<dbReference type="KEGG" id="cca:CCA_00010"/>
<dbReference type="eggNOG" id="COG1054">
    <property type="taxonomic scope" value="Bacteria"/>
</dbReference>
<dbReference type="HOGENOM" id="CLU_038878_1_0_0"/>
<dbReference type="OrthoDB" id="9778326at2"/>
<dbReference type="Proteomes" id="UP000002193">
    <property type="component" value="Chromosome"/>
</dbReference>
<dbReference type="GO" id="GO:0016705">
    <property type="term" value="F:oxidoreductase activity, acting on paired donors, with incorporation or reduction of molecular oxygen"/>
    <property type="evidence" value="ECO:0007669"/>
    <property type="project" value="UniProtKB-UniRule"/>
</dbReference>
<dbReference type="GO" id="GO:0006400">
    <property type="term" value="P:tRNA modification"/>
    <property type="evidence" value="ECO:0007669"/>
    <property type="project" value="UniProtKB-UniRule"/>
</dbReference>
<dbReference type="CDD" id="cd01518">
    <property type="entry name" value="RHOD_YceA"/>
    <property type="match status" value="1"/>
</dbReference>
<dbReference type="Gene3D" id="3.30.70.100">
    <property type="match status" value="1"/>
</dbReference>
<dbReference type="Gene3D" id="3.40.250.10">
    <property type="entry name" value="Rhodanese-like domain"/>
    <property type="match status" value="1"/>
</dbReference>
<dbReference type="HAMAP" id="MF_00469">
    <property type="entry name" value="TrhO"/>
    <property type="match status" value="1"/>
</dbReference>
<dbReference type="InterPro" id="IPR001763">
    <property type="entry name" value="Rhodanese-like_dom"/>
</dbReference>
<dbReference type="InterPro" id="IPR036873">
    <property type="entry name" value="Rhodanese-like_dom_sf"/>
</dbReference>
<dbReference type="InterPro" id="IPR022111">
    <property type="entry name" value="Rhodanese_C"/>
</dbReference>
<dbReference type="InterPro" id="IPR020936">
    <property type="entry name" value="TrhO"/>
</dbReference>
<dbReference type="InterPro" id="IPR040503">
    <property type="entry name" value="TRHO_N"/>
</dbReference>
<dbReference type="NCBIfam" id="NF001134">
    <property type="entry name" value="PRK00142.1-2"/>
    <property type="match status" value="1"/>
</dbReference>
<dbReference type="NCBIfam" id="NF001135">
    <property type="entry name" value="PRK00142.1-3"/>
    <property type="match status" value="1"/>
</dbReference>
<dbReference type="PANTHER" id="PTHR43268:SF3">
    <property type="entry name" value="RHODANESE-LIKE DOMAIN-CONTAINING PROTEIN 7-RELATED"/>
    <property type="match status" value="1"/>
</dbReference>
<dbReference type="PANTHER" id="PTHR43268">
    <property type="entry name" value="THIOSULFATE SULFURTRANSFERASE/RHODANESE-LIKE DOMAIN-CONTAINING PROTEIN 2"/>
    <property type="match status" value="1"/>
</dbReference>
<dbReference type="Pfam" id="PF00581">
    <property type="entry name" value="Rhodanese"/>
    <property type="match status" value="1"/>
</dbReference>
<dbReference type="Pfam" id="PF12368">
    <property type="entry name" value="Rhodanese_C"/>
    <property type="match status" value="1"/>
</dbReference>
<dbReference type="Pfam" id="PF17773">
    <property type="entry name" value="UPF0176_N"/>
    <property type="match status" value="1"/>
</dbReference>
<dbReference type="SMART" id="SM00450">
    <property type="entry name" value="RHOD"/>
    <property type="match status" value="1"/>
</dbReference>
<dbReference type="SUPFAM" id="SSF52821">
    <property type="entry name" value="Rhodanese/Cell cycle control phosphatase"/>
    <property type="match status" value="1"/>
</dbReference>
<dbReference type="PROSITE" id="PS50206">
    <property type="entry name" value="RHODANESE_3"/>
    <property type="match status" value="1"/>
</dbReference>
<organism>
    <name type="scientific">Chlamydia caviae (strain ATCC VR-813 / DSM 19441 / 03DC25 / GPIC)</name>
    <name type="common">Chlamydophila caviae</name>
    <dbReference type="NCBI Taxonomy" id="227941"/>
    <lineage>
        <taxon>Bacteria</taxon>
        <taxon>Pseudomonadati</taxon>
        <taxon>Chlamydiota</taxon>
        <taxon>Chlamydiia</taxon>
        <taxon>Chlamydiales</taxon>
        <taxon>Chlamydiaceae</taxon>
        <taxon>Chlamydia/Chlamydophila group</taxon>
        <taxon>Chlamydia</taxon>
    </lineage>
</organism>
<keyword id="KW-0560">Oxidoreductase</keyword>
<keyword id="KW-0819">tRNA processing</keyword>
<reference key="1">
    <citation type="journal article" date="2003" name="Nucleic Acids Res.">
        <title>Genome sequence of Chlamydophila caviae (Chlamydia psittaci GPIC): examining the role of niche-specific genes in the evolution of the Chlamydiaceae.</title>
        <authorList>
            <person name="Read T.D."/>
            <person name="Myers G.S.A."/>
            <person name="Brunham R.C."/>
            <person name="Nelson W.C."/>
            <person name="Paulsen I.T."/>
            <person name="Heidelberg J.F."/>
            <person name="Holtzapple E.K."/>
            <person name="Khouri H.M."/>
            <person name="Federova N.B."/>
            <person name="Carty H.A."/>
            <person name="Umayam L.A."/>
            <person name="Haft D.H."/>
            <person name="Peterson J.D."/>
            <person name="Beanan M.J."/>
            <person name="White O."/>
            <person name="Salzberg S.L."/>
            <person name="Hsia R.-C."/>
            <person name="McClarty G."/>
            <person name="Rank R.G."/>
            <person name="Bavoil P.M."/>
            <person name="Fraser C.M."/>
        </authorList>
    </citation>
    <scope>NUCLEOTIDE SEQUENCE [LARGE SCALE GENOMIC DNA]</scope>
    <source>
        <strain>ATCC VR-813 / DSM 19441 / 03DC25 / GPIC</strain>
    </source>
</reference>
<protein>
    <recommendedName>
        <fullName evidence="1">tRNA uridine(34) hydroxylase</fullName>
        <ecNumber evidence="1">1.14.-.-</ecNumber>
    </recommendedName>
    <alternativeName>
        <fullName evidence="1">tRNA hydroxylation protein O</fullName>
    </alternativeName>
</protein>
<comment type="function">
    <text evidence="1">Catalyzes oxygen-dependent 5-hydroxyuridine (ho5U) modification at position 34 in tRNAs.</text>
</comment>
<comment type="catalytic activity">
    <reaction evidence="1">
        <text>uridine(34) in tRNA + AH2 + O2 = 5-hydroxyuridine(34) in tRNA + A + H2O</text>
        <dbReference type="Rhea" id="RHEA:64224"/>
        <dbReference type="Rhea" id="RHEA-COMP:11727"/>
        <dbReference type="Rhea" id="RHEA-COMP:13381"/>
        <dbReference type="ChEBI" id="CHEBI:13193"/>
        <dbReference type="ChEBI" id="CHEBI:15377"/>
        <dbReference type="ChEBI" id="CHEBI:15379"/>
        <dbReference type="ChEBI" id="CHEBI:17499"/>
        <dbReference type="ChEBI" id="CHEBI:65315"/>
        <dbReference type="ChEBI" id="CHEBI:136877"/>
    </reaction>
</comment>
<comment type="similarity">
    <text evidence="1">Belongs to the TrhO family.</text>
</comment>
<feature type="chain" id="PRO_0000161462" description="tRNA uridine(34) hydroxylase">
    <location>
        <begin position="1"/>
        <end position="331"/>
    </location>
</feature>
<feature type="domain" description="Rhodanese" evidence="1">
    <location>
        <begin position="122"/>
        <end position="218"/>
    </location>
</feature>
<feature type="active site" description="Cysteine persulfide intermediate" evidence="1">
    <location>
        <position position="178"/>
    </location>
</feature>